<evidence type="ECO:0000255" key="1">
    <source>
        <dbReference type="HAMAP-Rule" id="MF_01365"/>
    </source>
</evidence>
<evidence type="ECO:0000305" key="2"/>
<name>RL6_RHOPS</name>
<gene>
    <name evidence="1" type="primary">rplF</name>
    <name type="ordered locus">RPD_3169</name>
</gene>
<dbReference type="EMBL" id="CP000283">
    <property type="protein sequence ID" value="ABE40395.1"/>
    <property type="molecule type" value="Genomic_DNA"/>
</dbReference>
<dbReference type="SMR" id="Q134U4"/>
<dbReference type="STRING" id="316057.RPD_3169"/>
<dbReference type="KEGG" id="rpd:RPD_3169"/>
<dbReference type="eggNOG" id="COG0097">
    <property type="taxonomic scope" value="Bacteria"/>
</dbReference>
<dbReference type="HOGENOM" id="CLU_065464_1_2_5"/>
<dbReference type="BioCyc" id="RPAL316057:RPD_RS15910-MONOMER"/>
<dbReference type="Proteomes" id="UP000001818">
    <property type="component" value="Chromosome"/>
</dbReference>
<dbReference type="GO" id="GO:0022625">
    <property type="term" value="C:cytosolic large ribosomal subunit"/>
    <property type="evidence" value="ECO:0007669"/>
    <property type="project" value="TreeGrafter"/>
</dbReference>
<dbReference type="GO" id="GO:0019843">
    <property type="term" value="F:rRNA binding"/>
    <property type="evidence" value="ECO:0007669"/>
    <property type="project" value="UniProtKB-UniRule"/>
</dbReference>
<dbReference type="GO" id="GO:0003735">
    <property type="term" value="F:structural constituent of ribosome"/>
    <property type="evidence" value="ECO:0007669"/>
    <property type="project" value="InterPro"/>
</dbReference>
<dbReference type="GO" id="GO:0002181">
    <property type="term" value="P:cytoplasmic translation"/>
    <property type="evidence" value="ECO:0007669"/>
    <property type="project" value="TreeGrafter"/>
</dbReference>
<dbReference type="FunFam" id="3.90.930.12:FF:000001">
    <property type="entry name" value="50S ribosomal protein L6"/>
    <property type="match status" value="1"/>
</dbReference>
<dbReference type="FunFam" id="3.90.930.12:FF:000002">
    <property type="entry name" value="50S ribosomal protein L6"/>
    <property type="match status" value="1"/>
</dbReference>
<dbReference type="Gene3D" id="3.90.930.12">
    <property type="entry name" value="Ribosomal protein L6, alpha-beta domain"/>
    <property type="match status" value="2"/>
</dbReference>
<dbReference type="HAMAP" id="MF_01365_B">
    <property type="entry name" value="Ribosomal_uL6_B"/>
    <property type="match status" value="1"/>
</dbReference>
<dbReference type="InterPro" id="IPR000702">
    <property type="entry name" value="Ribosomal_uL6-like"/>
</dbReference>
<dbReference type="InterPro" id="IPR036789">
    <property type="entry name" value="Ribosomal_uL6-like_a/b-dom_sf"/>
</dbReference>
<dbReference type="InterPro" id="IPR020040">
    <property type="entry name" value="Ribosomal_uL6_a/b-dom"/>
</dbReference>
<dbReference type="InterPro" id="IPR019906">
    <property type="entry name" value="Ribosomal_uL6_bac-type"/>
</dbReference>
<dbReference type="InterPro" id="IPR002358">
    <property type="entry name" value="Ribosomal_uL6_CS"/>
</dbReference>
<dbReference type="NCBIfam" id="TIGR03654">
    <property type="entry name" value="L6_bact"/>
    <property type="match status" value="1"/>
</dbReference>
<dbReference type="PANTHER" id="PTHR11655">
    <property type="entry name" value="60S/50S RIBOSOMAL PROTEIN L6/L9"/>
    <property type="match status" value="1"/>
</dbReference>
<dbReference type="PANTHER" id="PTHR11655:SF14">
    <property type="entry name" value="LARGE RIBOSOMAL SUBUNIT PROTEIN UL6M"/>
    <property type="match status" value="1"/>
</dbReference>
<dbReference type="Pfam" id="PF00347">
    <property type="entry name" value="Ribosomal_L6"/>
    <property type="match status" value="2"/>
</dbReference>
<dbReference type="PIRSF" id="PIRSF002162">
    <property type="entry name" value="Ribosomal_L6"/>
    <property type="match status" value="1"/>
</dbReference>
<dbReference type="PRINTS" id="PR00059">
    <property type="entry name" value="RIBOSOMALL6"/>
</dbReference>
<dbReference type="SUPFAM" id="SSF56053">
    <property type="entry name" value="Ribosomal protein L6"/>
    <property type="match status" value="2"/>
</dbReference>
<dbReference type="PROSITE" id="PS00525">
    <property type="entry name" value="RIBOSOMAL_L6_1"/>
    <property type="match status" value="1"/>
</dbReference>
<feature type="chain" id="PRO_0000260929" description="Large ribosomal subunit protein uL6">
    <location>
        <begin position="1"/>
        <end position="177"/>
    </location>
</feature>
<accession>Q134U4</accession>
<comment type="function">
    <text evidence="1">This protein binds to the 23S rRNA, and is important in its secondary structure. It is located near the subunit interface in the base of the L7/L12 stalk, and near the tRNA binding site of the peptidyltransferase center.</text>
</comment>
<comment type="subunit">
    <text evidence="1">Part of the 50S ribosomal subunit.</text>
</comment>
<comment type="similarity">
    <text evidence="1">Belongs to the universal ribosomal protein uL6 family.</text>
</comment>
<organism>
    <name type="scientific">Rhodopseudomonas palustris (strain BisB5)</name>
    <dbReference type="NCBI Taxonomy" id="316057"/>
    <lineage>
        <taxon>Bacteria</taxon>
        <taxon>Pseudomonadati</taxon>
        <taxon>Pseudomonadota</taxon>
        <taxon>Alphaproteobacteria</taxon>
        <taxon>Hyphomicrobiales</taxon>
        <taxon>Nitrobacteraceae</taxon>
        <taxon>Rhodopseudomonas</taxon>
    </lineage>
</organism>
<proteinExistence type="inferred from homology"/>
<reference key="1">
    <citation type="submission" date="2006-03" db="EMBL/GenBank/DDBJ databases">
        <title>Complete sequence of Rhodopseudomonas palustris BisB5.</title>
        <authorList>
            <consortium name="US DOE Joint Genome Institute"/>
            <person name="Copeland A."/>
            <person name="Lucas S."/>
            <person name="Lapidus A."/>
            <person name="Barry K."/>
            <person name="Detter J.C."/>
            <person name="Glavina del Rio T."/>
            <person name="Hammon N."/>
            <person name="Israni S."/>
            <person name="Dalin E."/>
            <person name="Tice H."/>
            <person name="Pitluck S."/>
            <person name="Chain P."/>
            <person name="Malfatti S."/>
            <person name="Shin M."/>
            <person name="Vergez L."/>
            <person name="Schmutz J."/>
            <person name="Larimer F."/>
            <person name="Land M."/>
            <person name="Hauser L."/>
            <person name="Pelletier D.A."/>
            <person name="Kyrpides N."/>
            <person name="Lykidis A."/>
            <person name="Oda Y."/>
            <person name="Harwood C.S."/>
            <person name="Richardson P."/>
        </authorList>
    </citation>
    <scope>NUCLEOTIDE SEQUENCE [LARGE SCALE GENOMIC DNA]</scope>
    <source>
        <strain>BisB5</strain>
    </source>
</reference>
<sequence>MSRVGKKPVTVPSGVTATVEGQTVKMKGPKGQLQFVVHDDVDVKFEDGSVKVAPRFETNRAQALYGTARAQIANLVDGVTKGFEKKLEITGVGYRASLQGKKLQLALGYSHDVIYDIPEGITITVPKPTEINVVGIDSQKVGQVAAEIRDYRPPEPYKGKGVRYSDEFIFRKEGKKK</sequence>
<protein>
    <recommendedName>
        <fullName evidence="1">Large ribosomal subunit protein uL6</fullName>
    </recommendedName>
    <alternativeName>
        <fullName evidence="2">50S ribosomal protein L6</fullName>
    </alternativeName>
</protein>
<keyword id="KW-0687">Ribonucleoprotein</keyword>
<keyword id="KW-0689">Ribosomal protein</keyword>
<keyword id="KW-0694">RNA-binding</keyword>
<keyword id="KW-0699">rRNA-binding</keyword>